<feature type="chain" id="PRO_0000199948" description="Probable sulfite reductase [NADPH] flavoprotein component">
    <location>
        <begin position="1"/>
        <end position="1006"/>
    </location>
</feature>
<feature type="domain" description="FAD-binding FR-type" evidence="2">
    <location>
        <begin position="622"/>
        <end position="852"/>
    </location>
</feature>
<feature type="binding site" evidence="1">
    <location>
        <begin position="658"/>
        <end position="669"/>
    </location>
    <ligand>
        <name>FAD</name>
        <dbReference type="ChEBI" id="CHEBI:57692"/>
    </ligand>
</feature>
<feature type="binding site" evidence="1">
    <location>
        <begin position="788"/>
        <end position="798"/>
    </location>
    <ligand>
        <name>FAD</name>
        <dbReference type="ChEBI" id="CHEBI:57692"/>
    </ligand>
</feature>
<reference key="1">
    <citation type="journal article" date="2002" name="Nature">
        <title>The genome sequence of Schizosaccharomyces pombe.</title>
        <authorList>
            <person name="Wood V."/>
            <person name="Gwilliam R."/>
            <person name="Rajandream M.A."/>
            <person name="Lyne M.H."/>
            <person name="Lyne R."/>
            <person name="Stewart A."/>
            <person name="Sgouros J.G."/>
            <person name="Peat N."/>
            <person name="Hayles J."/>
            <person name="Baker S.G."/>
            <person name="Basham D."/>
            <person name="Bowman S."/>
            <person name="Brooks K."/>
            <person name="Brown D."/>
            <person name="Brown S."/>
            <person name="Chillingworth T."/>
            <person name="Churcher C.M."/>
            <person name="Collins M."/>
            <person name="Connor R."/>
            <person name="Cronin A."/>
            <person name="Davis P."/>
            <person name="Feltwell T."/>
            <person name="Fraser A."/>
            <person name="Gentles S."/>
            <person name="Goble A."/>
            <person name="Hamlin N."/>
            <person name="Harris D.E."/>
            <person name="Hidalgo J."/>
            <person name="Hodgson G."/>
            <person name="Holroyd S."/>
            <person name="Hornsby T."/>
            <person name="Howarth S."/>
            <person name="Huckle E.J."/>
            <person name="Hunt S."/>
            <person name="Jagels K."/>
            <person name="James K.D."/>
            <person name="Jones L."/>
            <person name="Jones M."/>
            <person name="Leather S."/>
            <person name="McDonald S."/>
            <person name="McLean J."/>
            <person name="Mooney P."/>
            <person name="Moule S."/>
            <person name="Mungall K.L."/>
            <person name="Murphy L.D."/>
            <person name="Niblett D."/>
            <person name="Odell C."/>
            <person name="Oliver K."/>
            <person name="O'Neil S."/>
            <person name="Pearson D."/>
            <person name="Quail M.A."/>
            <person name="Rabbinowitsch E."/>
            <person name="Rutherford K.M."/>
            <person name="Rutter S."/>
            <person name="Saunders D."/>
            <person name="Seeger K."/>
            <person name="Sharp S."/>
            <person name="Skelton J."/>
            <person name="Simmonds M.N."/>
            <person name="Squares R."/>
            <person name="Squares S."/>
            <person name="Stevens K."/>
            <person name="Taylor K."/>
            <person name="Taylor R.G."/>
            <person name="Tivey A."/>
            <person name="Walsh S.V."/>
            <person name="Warren T."/>
            <person name="Whitehead S."/>
            <person name="Woodward J.R."/>
            <person name="Volckaert G."/>
            <person name="Aert R."/>
            <person name="Robben J."/>
            <person name="Grymonprez B."/>
            <person name="Weltjens I."/>
            <person name="Vanstreels E."/>
            <person name="Rieger M."/>
            <person name="Schaefer M."/>
            <person name="Mueller-Auer S."/>
            <person name="Gabel C."/>
            <person name="Fuchs M."/>
            <person name="Duesterhoeft A."/>
            <person name="Fritzc C."/>
            <person name="Holzer E."/>
            <person name="Moestl D."/>
            <person name="Hilbert H."/>
            <person name="Borzym K."/>
            <person name="Langer I."/>
            <person name="Beck A."/>
            <person name="Lehrach H."/>
            <person name="Reinhardt R."/>
            <person name="Pohl T.M."/>
            <person name="Eger P."/>
            <person name="Zimmermann W."/>
            <person name="Wedler H."/>
            <person name="Wambutt R."/>
            <person name="Purnelle B."/>
            <person name="Goffeau A."/>
            <person name="Cadieu E."/>
            <person name="Dreano S."/>
            <person name="Gloux S."/>
            <person name="Lelaure V."/>
            <person name="Mottier S."/>
            <person name="Galibert F."/>
            <person name="Aves S.J."/>
            <person name="Xiang Z."/>
            <person name="Hunt C."/>
            <person name="Moore K."/>
            <person name="Hurst S.M."/>
            <person name="Lucas M."/>
            <person name="Rochet M."/>
            <person name="Gaillardin C."/>
            <person name="Tallada V.A."/>
            <person name="Garzon A."/>
            <person name="Thode G."/>
            <person name="Daga R.R."/>
            <person name="Cruzado L."/>
            <person name="Jimenez J."/>
            <person name="Sanchez M."/>
            <person name="del Rey F."/>
            <person name="Benito J."/>
            <person name="Dominguez A."/>
            <person name="Revuelta J.L."/>
            <person name="Moreno S."/>
            <person name="Armstrong J."/>
            <person name="Forsburg S.L."/>
            <person name="Cerutti L."/>
            <person name="Lowe T."/>
            <person name="McCombie W.R."/>
            <person name="Paulsen I."/>
            <person name="Potashkin J."/>
            <person name="Shpakovski G.V."/>
            <person name="Ussery D."/>
            <person name="Barrell B.G."/>
            <person name="Nurse P."/>
        </authorList>
    </citation>
    <scope>NUCLEOTIDE SEQUENCE [LARGE SCALE GENOMIC DNA]</scope>
    <source>
        <strain>972 / ATCC 24843</strain>
    </source>
</reference>
<sequence length="1006" mass="111353">MVATDSSDQVAKFDVSHKIIEDIVYSLSNRIFSYAEHVPLNRYLTQWNNSGRRNGFSNNVELFNLEARSGASAFLLGSYTAAISSPGVYSMMTPSSCLSLLNPLLSNIIPFYGASKPLVVHVAALAYLEQTYCADNVSVLDFSYANNFTVFASQSNVEAAHLALASTLAAKAAPVIHVYEPDAIVTTTDPSLPLLDSNAVVECFNSYQSEADPVSNASKALKHVNDYFNTSYAPAEYYGSQTASKVIVTFGKSETVAARALLAANPDVGVLSIRIFPFVAENIFNVLPTTCKSLVVLSQVRSTAVGTSSIYYSFLLATLLSTKPSALAISEHRYSLVESVTLSSLFDALHETLQLKAATPKAVHVDKSINVWESDVGDSLVLSLVSAYRTDKSRSVAFRPLFDNLTLAGVRFTVAQVSTANAVLTDVVKDVDADITILTTDRLPLHYRVLAKAAEHSICLLQSSIAPDEATKKLPYEFIADALEKGVKLVLIDPKKFAIDASNLPLLVSFIQLVKPGLGVDEALAVLAKQNNLTDTNLKDAVDSLKQSLSFINLDASALKDREPSEKELPSTAKETSFAPNAVKTLDEDITPQSSNWQTVAKQIIFPEAYKKKDALRPDVSEKVFTVHVRANKRLTPAEYNRNIFHIEFDLGDSGLTYDIGEALGVYGVNNKTHVHDFIEEYGLDANELIHVPSIQHPGHWETRTVFQALCQNIDIFGKPTKKFHEQLLEFETDEKERADLQILISPAGAPDFKRRAEVDMLTYADVLKEFKHAKLTAAQIAQIVPVIKRREYSISSSQKKHNDSVHLLVVVVGWKDGMGRDRYGQCSHYLSNLKVGEPLCVAVKTSVMKLPTSPLKPIVMAGLGTGLAPFRAFLQFKEWQRMQGIESGDILLYLGSRTQREEYLYGEDWEAYHSANLLTHIGQAFSRDQPYKIYIQDVMRSTKDMLKKALMDEGGSFYLCGPTWPLPEITSVLEEVIQSSYDEPVDARKIIEQWKEERRFVIEVY</sequence>
<protein>
    <recommendedName>
        <fullName>Probable sulfite reductase [NADPH] flavoprotein component</fullName>
        <ecNumber>1.8.1.2</ecNumber>
    </recommendedName>
</protein>
<organism>
    <name type="scientific">Schizosaccharomyces pombe (strain 972 / ATCC 24843)</name>
    <name type="common">Fission yeast</name>
    <dbReference type="NCBI Taxonomy" id="284812"/>
    <lineage>
        <taxon>Eukaryota</taxon>
        <taxon>Fungi</taxon>
        <taxon>Dikarya</taxon>
        <taxon>Ascomycota</taxon>
        <taxon>Taphrinomycotina</taxon>
        <taxon>Schizosaccharomycetes</taxon>
        <taxon>Schizosaccharomycetales</taxon>
        <taxon>Schizosaccharomycetaceae</taxon>
        <taxon>Schizosaccharomyces</taxon>
    </lineage>
</organism>
<evidence type="ECO:0000250" key="1"/>
<evidence type="ECO:0000255" key="2">
    <source>
        <dbReference type="PROSITE-ProRule" id="PRU00716"/>
    </source>
</evidence>
<keyword id="KW-0249">Electron transport</keyword>
<keyword id="KW-0274">FAD</keyword>
<keyword id="KW-0285">Flavoprotein</keyword>
<keyword id="KW-0288">FMN</keyword>
<keyword id="KW-0521">NADP</keyword>
<keyword id="KW-0560">Oxidoreductase</keyword>
<keyword id="KW-1185">Reference proteome</keyword>
<keyword id="KW-0813">Transport</keyword>
<proteinExistence type="inferred from homology"/>
<comment type="function">
    <text evidence="1">This enzyme catalyzes the 6-electron reduction of sulfite to sulfide. This is one of several activities required for the biosynthesis of L-cysteine from sulfate (By similarity).</text>
</comment>
<comment type="catalytic activity">
    <reaction>
        <text>hydrogen sulfide + 3 NADP(+) + 3 H2O = sulfite + 3 NADPH + 4 H(+)</text>
        <dbReference type="Rhea" id="RHEA:13801"/>
        <dbReference type="ChEBI" id="CHEBI:15377"/>
        <dbReference type="ChEBI" id="CHEBI:15378"/>
        <dbReference type="ChEBI" id="CHEBI:17359"/>
        <dbReference type="ChEBI" id="CHEBI:29919"/>
        <dbReference type="ChEBI" id="CHEBI:57783"/>
        <dbReference type="ChEBI" id="CHEBI:58349"/>
        <dbReference type="EC" id="1.8.1.2"/>
    </reaction>
</comment>
<comment type="cofactor">
    <cofactor evidence="1">
        <name>FAD</name>
        <dbReference type="ChEBI" id="CHEBI:57692"/>
    </cofactor>
    <text evidence="1">Binds 1 FAD per subunit.</text>
</comment>
<comment type="cofactor">
    <cofactor evidence="1">
        <name>FMN</name>
        <dbReference type="ChEBI" id="CHEBI:58210"/>
    </cofactor>
    <text evidence="1">Binds 1 FMN per subunit.</text>
</comment>
<comment type="pathway">
    <text>Sulfur metabolism; hydrogen sulfide biosynthesis; hydrogen sulfide from sulfite (NADPH route): step 1/1.</text>
</comment>
<dbReference type="EC" id="1.8.1.2"/>
<dbReference type="EMBL" id="CU329672">
    <property type="protein sequence ID" value="CAA21818.2"/>
    <property type="molecule type" value="Genomic_DNA"/>
</dbReference>
<dbReference type="PIR" id="T41439">
    <property type="entry name" value="T41439"/>
</dbReference>
<dbReference type="SMR" id="Q09878"/>
<dbReference type="BioGRID" id="275402">
    <property type="interactions" value="44"/>
</dbReference>
<dbReference type="FunCoup" id="Q09878">
    <property type="interactions" value="368"/>
</dbReference>
<dbReference type="STRING" id="284812.Q09878"/>
<dbReference type="iPTMnet" id="Q09878"/>
<dbReference type="PaxDb" id="4896-SPCC584.01c.1"/>
<dbReference type="EnsemblFungi" id="SPCC584.01c.1">
    <property type="protein sequence ID" value="SPCC584.01c.1:pep"/>
    <property type="gene ID" value="SPCC584.01c"/>
</dbReference>
<dbReference type="KEGG" id="spo:2538821"/>
<dbReference type="PomBase" id="SPCC584.01c"/>
<dbReference type="VEuPathDB" id="FungiDB:SPCC584.01c"/>
<dbReference type="eggNOG" id="KOG1158">
    <property type="taxonomic scope" value="Eukaryota"/>
</dbReference>
<dbReference type="HOGENOM" id="CLU_003662_1_0_1"/>
<dbReference type="InParanoid" id="Q09878"/>
<dbReference type="OMA" id="MIVAVNW"/>
<dbReference type="PhylomeDB" id="Q09878"/>
<dbReference type="UniPathway" id="UPA00140">
    <property type="reaction ID" value="UER00207"/>
</dbReference>
<dbReference type="PRO" id="PR:Q09878"/>
<dbReference type="Proteomes" id="UP000002485">
    <property type="component" value="Chromosome III"/>
</dbReference>
<dbReference type="GO" id="GO:0005829">
    <property type="term" value="C:cytosol"/>
    <property type="evidence" value="ECO:0007005"/>
    <property type="project" value="PomBase"/>
</dbReference>
<dbReference type="GO" id="GO:0009337">
    <property type="term" value="C:sulfite reductase complex (NADPH)"/>
    <property type="evidence" value="ECO:0000266"/>
    <property type="project" value="PomBase"/>
</dbReference>
<dbReference type="GO" id="GO:0050660">
    <property type="term" value="F:flavin adenine dinucleotide binding"/>
    <property type="evidence" value="ECO:0000318"/>
    <property type="project" value="GO_Central"/>
</dbReference>
<dbReference type="GO" id="GO:0010181">
    <property type="term" value="F:FMN binding"/>
    <property type="evidence" value="ECO:0000318"/>
    <property type="project" value="GO_Central"/>
</dbReference>
<dbReference type="GO" id="GO:0016491">
    <property type="term" value="F:oxidoreductase activity"/>
    <property type="evidence" value="ECO:0000318"/>
    <property type="project" value="GO_Central"/>
</dbReference>
<dbReference type="GO" id="GO:0004783">
    <property type="term" value="F:sulfite reductase (NADPH) activity"/>
    <property type="evidence" value="ECO:0007669"/>
    <property type="project" value="UniProtKB-EC"/>
</dbReference>
<dbReference type="GO" id="GO:0070814">
    <property type="term" value="P:hydrogen sulfide biosynthetic process"/>
    <property type="evidence" value="ECO:0007669"/>
    <property type="project" value="UniProtKB-UniPathway"/>
</dbReference>
<dbReference type="GO" id="GO:0000103">
    <property type="term" value="P:sulfate assimilation"/>
    <property type="evidence" value="ECO:0000266"/>
    <property type="project" value="PomBase"/>
</dbReference>
<dbReference type="CDD" id="cd06207">
    <property type="entry name" value="CyPoR_like"/>
    <property type="match status" value="1"/>
</dbReference>
<dbReference type="FunFam" id="1.20.990.10:FF:000010">
    <property type="entry name" value="Sulfite reductase [NADPH] flavoprotein component"/>
    <property type="match status" value="1"/>
</dbReference>
<dbReference type="Gene3D" id="3.40.50.970">
    <property type="match status" value="1"/>
</dbReference>
<dbReference type="Gene3D" id="1.20.990.10">
    <property type="entry name" value="NADPH-cytochrome p450 Reductase, Chain A, domain 3"/>
    <property type="match status" value="1"/>
</dbReference>
<dbReference type="Gene3D" id="3.40.50.80">
    <property type="entry name" value="Nucleotide-binding domain of ferredoxin-NADP reductase (FNR) module"/>
    <property type="match status" value="1"/>
</dbReference>
<dbReference type="Gene3D" id="3.40.920.10">
    <property type="entry name" value="Pyruvate-ferredoxin oxidoreductase, PFOR, domain III"/>
    <property type="match status" value="1"/>
</dbReference>
<dbReference type="Gene3D" id="2.40.30.10">
    <property type="entry name" value="Translation factors"/>
    <property type="match status" value="1"/>
</dbReference>
<dbReference type="InterPro" id="IPR003097">
    <property type="entry name" value="CysJ-like_FAD-binding"/>
</dbReference>
<dbReference type="InterPro" id="IPR017927">
    <property type="entry name" value="FAD-bd_FR_type"/>
</dbReference>
<dbReference type="InterPro" id="IPR001709">
    <property type="entry name" value="Flavoprot_Pyr_Nucl_cyt_Rdtase"/>
</dbReference>
<dbReference type="InterPro" id="IPR039261">
    <property type="entry name" value="FNR_nucleotide-bd"/>
</dbReference>
<dbReference type="InterPro" id="IPR023173">
    <property type="entry name" value="NADPH_Cyt_P450_Rdtase_alpha"/>
</dbReference>
<dbReference type="InterPro" id="IPR001433">
    <property type="entry name" value="OxRdtase_FAD/NAD-bd"/>
</dbReference>
<dbReference type="InterPro" id="IPR002869">
    <property type="entry name" value="Pyrv_flavodox_OxRed_cen"/>
</dbReference>
<dbReference type="InterPro" id="IPR017938">
    <property type="entry name" value="Riboflavin_synthase-like_b-brl"/>
</dbReference>
<dbReference type="InterPro" id="IPR009014">
    <property type="entry name" value="Transketo_C/PFOR_II"/>
</dbReference>
<dbReference type="PANTHER" id="PTHR19384">
    <property type="entry name" value="NITRIC OXIDE SYNTHASE-RELATED"/>
    <property type="match status" value="1"/>
</dbReference>
<dbReference type="PANTHER" id="PTHR19384:SF109">
    <property type="entry name" value="SULFITE REDUCTASE [NADPH] FLAVOPROTEIN COMPONENT"/>
    <property type="match status" value="1"/>
</dbReference>
<dbReference type="Pfam" id="PF00667">
    <property type="entry name" value="FAD_binding_1"/>
    <property type="match status" value="1"/>
</dbReference>
<dbReference type="Pfam" id="PF00175">
    <property type="entry name" value="NAD_binding_1"/>
    <property type="match status" value="1"/>
</dbReference>
<dbReference type="PRINTS" id="PR00371">
    <property type="entry name" value="FPNCR"/>
</dbReference>
<dbReference type="SUPFAM" id="SSF52343">
    <property type="entry name" value="Ferredoxin reductase-like, C-terminal NADP-linked domain"/>
    <property type="match status" value="1"/>
</dbReference>
<dbReference type="SUPFAM" id="SSF53323">
    <property type="entry name" value="Pyruvate-ferredoxin oxidoreductase, PFOR, domain III"/>
    <property type="match status" value="1"/>
</dbReference>
<dbReference type="SUPFAM" id="SSF63380">
    <property type="entry name" value="Riboflavin synthase domain-like"/>
    <property type="match status" value="1"/>
</dbReference>
<dbReference type="SUPFAM" id="SSF52922">
    <property type="entry name" value="TK C-terminal domain-like"/>
    <property type="match status" value="1"/>
</dbReference>
<dbReference type="PROSITE" id="PS51384">
    <property type="entry name" value="FAD_FR"/>
    <property type="match status" value="1"/>
</dbReference>
<gene>
    <name type="ORF">SPCC584.01c</name>
</gene>
<accession>Q09878</accession>
<name>MET10_SCHPO</name>